<sequence length="205" mass="22740">MNEQLHNRTMAFAGILQAIAQVQHLARHGESDTDELAASLNTILVTNPESAADVYQDKAALHKGYQLVLNQLGDSSQKDVEITRYLVGILALERKLTRSNSGLAMLAERINQVNRQLHHFAITDEQVIANLASIYSDIISNLGPKIQISGNPLCLQRPIVQHKIRALLLAAMRSAVLWRQLGGKRRHLVFARKAIIDTAKKSLTL</sequence>
<protein>
    <recommendedName>
        <fullName evidence="1">High frequency lysogenization protein HflD homolog</fullName>
    </recommendedName>
</protein>
<evidence type="ECO:0000255" key="1">
    <source>
        <dbReference type="HAMAP-Rule" id="MF_00695"/>
    </source>
</evidence>
<name>HFLD_SHESM</name>
<keyword id="KW-0997">Cell inner membrane</keyword>
<keyword id="KW-1003">Cell membrane</keyword>
<keyword id="KW-0963">Cytoplasm</keyword>
<keyword id="KW-0472">Membrane</keyword>
<accession>Q0HJT8</accession>
<comment type="subcellular location">
    <subcellularLocation>
        <location>Cytoplasm</location>
    </subcellularLocation>
    <subcellularLocation>
        <location evidence="1">Cell inner membrane</location>
        <topology evidence="1">Peripheral membrane protein</topology>
        <orientation evidence="1">Cytoplasmic side</orientation>
    </subcellularLocation>
</comment>
<comment type="similarity">
    <text evidence="1">Belongs to the HflD family.</text>
</comment>
<proteinExistence type="inferred from homology"/>
<gene>
    <name evidence="1" type="primary">hflD</name>
    <name type="ordered locus">Shewmr4_1602</name>
</gene>
<dbReference type="EMBL" id="CP000446">
    <property type="protein sequence ID" value="ABI38679.1"/>
    <property type="molecule type" value="Genomic_DNA"/>
</dbReference>
<dbReference type="RefSeq" id="WP_011622382.1">
    <property type="nucleotide sequence ID" value="NC_008321.1"/>
</dbReference>
<dbReference type="SMR" id="Q0HJT8"/>
<dbReference type="KEGG" id="she:Shewmr4_1602"/>
<dbReference type="HOGENOM" id="CLU_098920_0_0_6"/>
<dbReference type="GO" id="GO:0005737">
    <property type="term" value="C:cytoplasm"/>
    <property type="evidence" value="ECO:0007669"/>
    <property type="project" value="UniProtKB-SubCell"/>
</dbReference>
<dbReference type="GO" id="GO:0005886">
    <property type="term" value="C:plasma membrane"/>
    <property type="evidence" value="ECO:0007669"/>
    <property type="project" value="UniProtKB-SubCell"/>
</dbReference>
<dbReference type="FunFam" id="1.10.3890.10:FF:000002">
    <property type="entry name" value="High frequency lysogenization protein HflD homolog"/>
    <property type="match status" value="1"/>
</dbReference>
<dbReference type="Gene3D" id="1.10.3890.10">
    <property type="entry name" value="HflD-like"/>
    <property type="match status" value="1"/>
</dbReference>
<dbReference type="HAMAP" id="MF_00695">
    <property type="entry name" value="HflD_protein"/>
    <property type="match status" value="1"/>
</dbReference>
<dbReference type="InterPro" id="IPR007451">
    <property type="entry name" value="HflD"/>
</dbReference>
<dbReference type="InterPro" id="IPR035932">
    <property type="entry name" value="HflD-like_sf"/>
</dbReference>
<dbReference type="NCBIfam" id="NF001246">
    <property type="entry name" value="PRK00218.1-2"/>
    <property type="match status" value="1"/>
</dbReference>
<dbReference type="NCBIfam" id="NF001248">
    <property type="entry name" value="PRK00218.1-4"/>
    <property type="match status" value="1"/>
</dbReference>
<dbReference type="PANTHER" id="PTHR38100">
    <property type="entry name" value="HIGH FREQUENCY LYSOGENIZATION PROTEIN HFLD"/>
    <property type="match status" value="1"/>
</dbReference>
<dbReference type="PANTHER" id="PTHR38100:SF1">
    <property type="entry name" value="HIGH FREQUENCY LYSOGENIZATION PROTEIN HFLD"/>
    <property type="match status" value="1"/>
</dbReference>
<dbReference type="Pfam" id="PF04356">
    <property type="entry name" value="DUF489"/>
    <property type="match status" value="1"/>
</dbReference>
<dbReference type="SUPFAM" id="SSF101322">
    <property type="entry name" value="YcfC-like"/>
    <property type="match status" value="1"/>
</dbReference>
<organism>
    <name type="scientific">Shewanella sp. (strain MR-4)</name>
    <dbReference type="NCBI Taxonomy" id="60480"/>
    <lineage>
        <taxon>Bacteria</taxon>
        <taxon>Pseudomonadati</taxon>
        <taxon>Pseudomonadota</taxon>
        <taxon>Gammaproteobacteria</taxon>
        <taxon>Alteromonadales</taxon>
        <taxon>Shewanellaceae</taxon>
        <taxon>Shewanella</taxon>
    </lineage>
</organism>
<feature type="chain" id="PRO_1000045443" description="High frequency lysogenization protein HflD homolog">
    <location>
        <begin position="1"/>
        <end position="205"/>
    </location>
</feature>
<reference key="1">
    <citation type="submission" date="2006-08" db="EMBL/GenBank/DDBJ databases">
        <title>Complete sequence of Shewanella sp. MR-4.</title>
        <authorList>
            <consortium name="US DOE Joint Genome Institute"/>
            <person name="Copeland A."/>
            <person name="Lucas S."/>
            <person name="Lapidus A."/>
            <person name="Barry K."/>
            <person name="Detter J.C."/>
            <person name="Glavina del Rio T."/>
            <person name="Hammon N."/>
            <person name="Israni S."/>
            <person name="Dalin E."/>
            <person name="Tice H."/>
            <person name="Pitluck S."/>
            <person name="Kiss H."/>
            <person name="Brettin T."/>
            <person name="Bruce D."/>
            <person name="Han C."/>
            <person name="Tapia R."/>
            <person name="Gilna P."/>
            <person name="Schmutz J."/>
            <person name="Larimer F."/>
            <person name="Land M."/>
            <person name="Hauser L."/>
            <person name="Kyrpides N."/>
            <person name="Mikhailova N."/>
            <person name="Nealson K."/>
            <person name="Konstantinidis K."/>
            <person name="Klappenbach J."/>
            <person name="Tiedje J."/>
            <person name="Richardson P."/>
        </authorList>
    </citation>
    <scope>NUCLEOTIDE SEQUENCE [LARGE SCALE GENOMIC DNA]</scope>
    <source>
        <strain>MR-4</strain>
    </source>
</reference>